<dbReference type="EMBL" id="AB023041">
    <property type="protein sequence ID" value="BAB01061.1"/>
    <property type="molecule type" value="Genomic_DNA"/>
</dbReference>
<dbReference type="EMBL" id="CP002686">
    <property type="protein sequence ID" value="AEE77097.1"/>
    <property type="molecule type" value="Genomic_DNA"/>
</dbReference>
<dbReference type="EMBL" id="BT010608">
    <property type="protein sequence ID" value="AAQ89630.1"/>
    <property type="molecule type" value="mRNA"/>
</dbReference>
<dbReference type="EMBL" id="AK175296">
    <property type="protein sequence ID" value="BAD43059.1"/>
    <property type="molecule type" value="mRNA"/>
</dbReference>
<dbReference type="EMBL" id="AK176363">
    <property type="protein sequence ID" value="BAD44126.1"/>
    <property type="molecule type" value="mRNA"/>
</dbReference>
<dbReference type="RefSeq" id="NP_189227.1">
    <molecule id="Q9LU93-1"/>
    <property type="nucleotide sequence ID" value="NM_113502.3"/>
</dbReference>
<dbReference type="SMR" id="Q9LU93"/>
<dbReference type="BioGRID" id="7526">
    <property type="interactions" value="31"/>
</dbReference>
<dbReference type="FunCoup" id="Q9LU93">
    <property type="interactions" value="2880"/>
</dbReference>
<dbReference type="IntAct" id="Q9LU93">
    <property type="interactions" value="26"/>
</dbReference>
<dbReference type="STRING" id="3702.Q9LU93"/>
<dbReference type="iPTMnet" id="Q9LU93"/>
<dbReference type="PaxDb" id="3702-AT3G25980.1"/>
<dbReference type="ProteomicsDB" id="238511">
    <molecule id="Q9LU93-1"/>
</dbReference>
<dbReference type="EnsemblPlants" id="AT3G25980.1">
    <molecule id="Q9LU93-1"/>
    <property type="protein sequence ID" value="AT3G25980.1"/>
    <property type="gene ID" value="AT3G25980"/>
</dbReference>
<dbReference type="GeneID" id="822195"/>
<dbReference type="Gramene" id="AT3G25980.1">
    <molecule id="Q9LU93-1"/>
    <property type="protein sequence ID" value="AT3G25980.1"/>
    <property type="gene ID" value="AT3G25980"/>
</dbReference>
<dbReference type="KEGG" id="ath:AT3G25980"/>
<dbReference type="Araport" id="AT3G25980"/>
<dbReference type="TAIR" id="AT3G25980">
    <property type="gene designation" value="MAD2"/>
</dbReference>
<dbReference type="eggNOG" id="KOG3285">
    <property type="taxonomic scope" value="Eukaryota"/>
</dbReference>
<dbReference type="HOGENOM" id="CLU_072097_0_0_1"/>
<dbReference type="InParanoid" id="Q9LU93"/>
<dbReference type="OMA" id="WQFDVEI"/>
<dbReference type="OrthoDB" id="1806at2759"/>
<dbReference type="PhylomeDB" id="Q9LU93"/>
<dbReference type="CD-CODE" id="33FCD62D">
    <property type="entry name" value="Centrosome"/>
</dbReference>
<dbReference type="PRO" id="PR:Q9LU93"/>
<dbReference type="Proteomes" id="UP000006548">
    <property type="component" value="Chromosome 3"/>
</dbReference>
<dbReference type="ExpressionAtlas" id="Q9LU93">
    <property type="expression patterns" value="baseline and differential"/>
</dbReference>
<dbReference type="GO" id="GO:0010369">
    <property type="term" value="C:chromocenter"/>
    <property type="evidence" value="ECO:0000314"/>
    <property type="project" value="TAIR"/>
</dbReference>
<dbReference type="GO" id="GO:0005737">
    <property type="term" value="C:cytoplasm"/>
    <property type="evidence" value="ECO:0000314"/>
    <property type="project" value="UniProtKB"/>
</dbReference>
<dbReference type="GO" id="GO:0000776">
    <property type="term" value="C:kinetochore"/>
    <property type="evidence" value="ECO:0000314"/>
    <property type="project" value="TAIR"/>
</dbReference>
<dbReference type="GO" id="GO:0005828">
    <property type="term" value="C:kinetochore microtubule"/>
    <property type="evidence" value="ECO:0000314"/>
    <property type="project" value="UniProtKB"/>
</dbReference>
<dbReference type="GO" id="GO:0005635">
    <property type="term" value="C:nuclear envelope"/>
    <property type="evidence" value="ECO:0000314"/>
    <property type="project" value="TAIR"/>
</dbReference>
<dbReference type="GO" id="GO:0005634">
    <property type="term" value="C:nucleus"/>
    <property type="evidence" value="ECO:0000314"/>
    <property type="project" value="TAIR"/>
</dbReference>
<dbReference type="GO" id="GO:0005876">
    <property type="term" value="C:spindle microtubule"/>
    <property type="evidence" value="ECO:0000314"/>
    <property type="project" value="UniProtKB"/>
</dbReference>
<dbReference type="GO" id="GO:0051301">
    <property type="term" value="P:cell division"/>
    <property type="evidence" value="ECO:0007669"/>
    <property type="project" value="UniProtKB-KW"/>
</dbReference>
<dbReference type="GO" id="GO:0007094">
    <property type="term" value="P:mitotic spindle assembly checkpoint signaling"/>
    <property type="evidence" value="ECO:0000314"/>
    <property type="project" value="TAIR"/>
</dbReference>
<dbReference type="GO" id="GO:0007346">
    <property type="term" value="P:regulation of mitotic cell cycle"/>
    <property type="evidence" value="ECO:0000315"/>
    <property type="project" value="TAIR"/>
</dbReference>
<dbReference type="FunFam" id="3.30.900.10:FF:000004">
    <property type="entry name" value="Mitotic spindle checkpoint protein MAD2"/>
    <property type="match status" value="1"/>
</dbReference>
<dbReference type="Gene3D" id="3.30.900.10">
    <property type="entry name" value="HORMA domain"/>
    <property type="match status" value="1"/>
</dbReference>
<dbReference type="InterPro" id="IPR003511">
    <property type="entry name" value="HORMA_dom"/>
</dbReference>
<dbReference type="InterPro" id="IPR036570">
    <property type="entry name" value="HORMA_dom_sf"/>
</dbReference>
<dbReference type="InterPro" id="IPR045091">
    <property type="entry name" value="Mad2-like"/>
</dbReference>
<dbReference type="PANTHER" id="PTHR11842">
    <property type="entry name" value="MITOTIC SPINDLE ASSEMBLY CHECKPOINT PROTEIN MAD2"/>
    <property type="match status" value="1"/>
</dbReference>
<dbReference type="PANTHER" id="PTHR11842:SF11">
    <property type="entry name" value="MITOTIC SPINDLE ASSEMBLY CHECKPOINT PROTEIN MAD2A"/>
    <property type="match status" value="1"/>
</dbReference>
<dbReference type="Pfam" id="PF02301">
    <property type="entry name" value="HORMA"/>
    <property type="match status" value="1"/>
</dbReference>
<dbReference type="SUPFAM" id="SSF56019">
    <property type="entry name" value="The spindle assembly checkpoint protein mad2"/>
    <property type="match status" value="1"/>
</dbReference>
<dbReference type="PROSITE" id="PS50815">
    <property type="entry name" value="HORMA"/>
    <property type="match status" value="1"/>
</dbReference>
<comment type="function">
    <text evidence="2">Required for the execution of the mitotic checkpoint which monitors the process of kinetochore-spindle attachment and delays the onset of anaphase when this process is not complete. It inhibits the activity of the anaphase promoting complex by sequestering CDC20 until all chromosomes are aligned at the metaphase plate.</text>
</comment>
<comment type="subunit">
    <text evidence="2 3 4">Part of the mitotic checkpoint complex (MCC); interacts with MAD1, CDC20-1, CDC20-2 and CDC20-5. Interacts with BUBR1 at chromocenters and with BUB3.1. Interacts with EIF4B3 (PubMed:20706207).</text>
</comment>
<comment type="subcellular location">
    <subcellularLocation>
        <location evidence="2 5">Nucleus</location>
    </subcellularLocation>
    <subcellularLocation>
        <location evidence="5">Nucleus envelope</location>
    </subcellularLocation>
    <subcellularLocation>
        <location evidence="2">Chromosome</location>
    </subcellularLocation>
    <subcellularLocation>
        <location evidence="2">Chromosome</location>
        <location evidence="2">Centromere</location>
        <location evidence="2">Kinetochore</location>
    </subcellularLocation>
    <subcellularLocation>
        <location evidence="2">Cytoplasm</location>
        <location evidence="2">Cytoskeleton</location>
        <location evidence="2">Spindle</location>
    </subcellularLocation>
    <subcellularLocation>
        <location evidence="2 5">Cytoplasm</location>
    </subcellularLocation>
    <text evidence="5">Cytoplasmic in interphase cells. Accumulates onto both kinetochores and the spindle microtubules in cell arrested in metaphase. Present in chromocenters. Associates with unattached kinetochores upon spindle assembly checkpoint (SAC) activation. The nucleus envelope association requires the presence of NUA.</text>
</comment>
<comment type="alternative products">
    <event type="alternative splicing"/>
    <isoform>
        <id>Q9LU93-1</id>
        <name>1</name>
        <sequence type="displayed"/>
    </isoform>
    <text>A number of isoforms are produced. According to EST sequences.</text>
</comment>
<comment type="tissue specificity">
    <text evidence="2">Expressed in actively dividing tissues, early in organ development, in young leaves, lateral root primordia and root meristems.</text>
</comment>
<comment type="induction">
    <text evidence="2">Cell cycle regulated expression with a distinct expression peak at the G2/M boundary.</text>
</comment>
<comment type="disruption phenotype">
    <text evidence="5">No visible phenotype when grown under normal growth conditions and stunted roots when grown in vitro in absence of sucrose.</text>
</comment>
<comment type="similarity">
    <text evidence="7">Belongs to the MAD2 family.</text>
</comment>
<comment type="online information" name="Arabidopsis APC/C subunits">
    <link uri="http://personal.rhul.ac.uk/ujba/110/apc/APC.htm"/>
</comment>
<name>MAD2_ARATH</name>
<gene>
    <name evidence="6" type="primary">MAD2</name>
    <name evidence="8" type="ordered locus">At3g25980</name>
    <name evidence="9" type="ORF">MPE11.15</name>
</gene>
<keyword id="KW-0025">Alternative splicing</keyword>
<keyword id="KW-0131">Cell cycle</keyword>
<keyword id="KW-0132">Cell division</keyword>
<keyword id="KW-0137">Centromere</keyword>
<keyword id="KW-0158">Chromosome</keyword>
<keyword id="KW-0963">Cytoplasm</keyword>
<keyword id="KW-0206">Cytoskeleton</keyword>
<keyword id="KW-0995">Kinetochore</keyword>
<keyword id="KW-0498">Mitosis</keyword>
<keyword id="KW-0539">Nucleus</keyword>
<keyword id="KW-1185">Reference proteome</keyword>
<sequence>MASKTAAAKDIITLHGSAAIVSEFFCYAANSILYNRAVYPEESFVKVKKYGLPMLLIEDESVKSFMSNLTSQISEWLEAGKLQRVVLVIMSKATGEVLERWNFRIETDNEVVDKGVSREKSDKEIMREIQAIMRQVASSVTYLPCLDETCVFDVLAYTDTDVAVPFTWIESDPKLIANPQMVKLHGFDTKIHKVDTLVSYKNDEWDEEE</sequence>
<protein>
    <recommendedName>
        <fullName evidence="6">Mitotic spindle checkpoint protein MAD2</fullName>
    </recommendedName>
    <alternativeName>
        <fullName>Mitotic arrest deficient protein 2</fullName>
    </alternativeName>
</protein>
<feature type="chain" id="PRO_0000126121" description="Mitotic spindle checkpoint protein MAD2">
    <location>
        <begin position="1"/>
        <end position="209"/>
    </location>
</feature>
<feature type="domain" description="HORMA" evidence="1">
    <location>
        <begin position="15"/>
        <end position="198"/>
    </location>
</feature>
<proteinExistence type="evidence at protein level"/>
<accession>Q9LU93</accession>
<accession>Q67YV5</accession>
<organism>
    <name type="scientific">Arabidopsis thaliana</name>
    <name type="common">Mouse-ear cress</name>
    <dbReference type="NCBI Taxonomy" id="3702"/>
    <lineage>
        <taxon>Eukaryota</taxon>
        <taxon>Viridiplantae</taxon>
        <taxon>Streptophyta</taxon>
        <taxon>Embryophyta</taxon>
        <taxon>Tracheophyta</taxon>
        <taxon>Spermatophyta</taxon>
        <taxon>Magnoliopsida</taxon>
        <taxon>eudicotyledons</taxon>
        <taxon>Gunneridae</taxon>
        <taxon>Pentapetalae</taxon>
        <taxon>rosids</taxon>
        <taxon>malvids</taxon>
        <taxon>Brassicales</taxon>
        <taxon>Brassicaceae</taxon>
        <taxon>Camelineae</taxon>
        <taxon>Arabidopsis</taxon>
    </lineage>
</organism>
<reference key="1">
    <citation type="journal article" date="2000" name="DNA Res.">
        <title>Structural analysis of Arabidopsis thaliana chromosome 3. I. Sequence features of the regions of 4,504,864 bp covered by sixty P1 and TAC clones.</title>
        <authorList>
            <person name="Sato S."/>
            <person name="Nakamura Y."/>
            <person name="Kaneko T."/>
            <person name="Katoh T."/>
            <person name="Asamizu E."/>
            <person name="Tabata S."/>
        </authorList>
    </citation>
    <scope>NUCLEOTIDE SEQUENCE [LARGE SCALE GENOMIC DNA]</scope>
    <source>
        <strain>cv. Columbia</strain>
    </source>
</reference>
<reference key="2">
    <citation type="journal article" date="2017" name="Plant J.">
        <title>Araport11: a complete reannotation of the Arabidopsis thaliana reference genome.</title>
        <authorList>
            <person name="Cheng C.Y."/>
            <person name="Krishnakumar V."/>
            <person name="Chan A.P."/>
            <person name="Thibaud-Nissen F."/>
            <person name="Schobel S."/>
            <person name="Town C.D."/>
        </authorList>
    </citation>
    <scope>GENOME REANNOTATION</scope>
    <source>
        <strain>cv. Columbia</strain>
    </source>
</reference>
<reference key="3">
    <citation type="submission" date="2003-10" db="EMBL/GenBank/DDBJ databases">
        <title>Arabidopsis ORF clones.</title>
        <authorList>
            <person name="Cheuk R.F."/>
            <person name="Chen H."/>
            <person name="Kim C.J."/>
            <person name="Shinn P."/>
            <person name="Carninci P."/>
            <person name="Hayashizaki Y."/>
            <person name="Ishida J."/>
            <person name="Kamiya A."/>
            <person name="Kawai J."/>
            <person name="Narusaka M."/>
            <person name="Sakurai T."/>
            <person name="Satou M."/>
            <person name="Seki M."/>
            <person name="Shinozaki K."/>
            <person name="Ecker J.R."/>
        </authorList>
    </citation>
    <scope>NUCLEOTIDE SEQUENCE [LARGE SCALE MRNA]</scope>
    <source>
        <strain>cv. Columbia</strain>
    </source>
</reference>
<reference key="4">
    <citation type="submission" date="2004-09" db="EMBL/GenBank/DDBJ databases">
        <title>Large-scale analysis of RIKEN Arabidopsis full-length (RAFL) cDNAs.</title>
        <authorList>
            <person name="Totoki Y."/>
            <person name="Seki M."/>
            <person name="Ishida J."/>
            <person name="Nakajima M."/>
            <person name="Enju A."/>
            <person name="Kamiya A."/>
            <person name="Narusaka M."/>
            <person name="Shin-i T."/>
            <person name="Nakagawa M."/>
            <person name="Sakamoto N."/>
            <person name="Oishi K."/>
            <person name="Kohara Y."/>
            <person name="Kobayashi M."/>
            <person name="Toyoda A."/>
            <person name="Sakaki Y."/>
            <person name="Sakurai T."/>
            <person name="Iida K."/>
            <person name="Akiyama K."/>
            <person name="Satou M."/>
            <person name="Toyoda T."/>
            <person name="Konagaya A."/>
            <person name="Carninci P."/>
            <person name="Kawai J."/>
            <person name="Hayashizaki Y."/>
            <person name="Shinozaki K."/>
        </authorList>
    </citation>
    <scope>NUCLEOTIDE SEQUENCE [LARGE SCALE MRNA]</scope>
    <source>
        <strain>cv. Columbia</strain>
    </source>
</reference>
<reference key="5">
    <citation type="journal article" date="2009" name="PLoS ONE">
        <title>Spindle assembly checkpoint protein dynamics reveal conserved and unsuspected roles in plant cell division.</title>
        <authorList>
            <person name="Caillaud M.-C."/>
            <person name="Paganelli L."/>
            <person name="Lecomte P."/>
            <person name="Deslandes L."/>
            <person name="Quentin M."/>
            <person name="Pecrix Y."/>
            <person name="Le Bris M."/>
            <person name="Marfaing N."/>
            <person name="Abad P."/>
            <person name="Favery B."/>
        </authorList>
    </citation>
    <scope>FUNCTION</scope>
    <scope>INTERACTION WITH BUBR1 AND BUB3.1</scope>
    <scope>SUBCELLULAR LOCATION</scope>
    <scope>TISSUE SPECIFICITY</scope>
    <scope>INDUCTION</scope>
</reference>
<reference key="6">
    <citation type="journal article" date="2010" name="Mol. Syst. Biol.">
        <title>Targeted interactomics reveals a complex core cell cycle machinery in Arabidopsis thaliana.</title>
        <authorList>
            <person name="Van Leene J."/>
            <person name="Hollunder J."/>
            <person name="Eeckhout D."/>
            <person name="Persiau G."/>
            <person name="Van De Slijke E."/>
            <person name="Stals H."/>
            <person name="Van Isterdael G."/>
            <person name="Verkest A."/>
            <person name="Neirynck S."/>
            <person name="Buffel Y."/>
            <person name="De Bodt S."/>
            <person name="Maere S."/>
            <person name="Laukens K."/>
            <person name="Pharazyn A."/>
            <person name="Ferreira P.C.G."/>
            <person name="Eloy N."/>
            <person name="Renne C."/>
            <person name="Meyer C."/>
            <person name="Faure J.-D."/>
            <person name="Steinbrenner J."/>
            <person name="Beynon J."/>
            <person name="Larkin J.C."/>
            <person name="Van de Peer Y."/>
            <person name="Hilson P."/>
            <person name="Kuiper M."/>
            <person name="De Veylder L."/>
            <person name="Van Onckelen H."/>
            <person name="Inze D."/>
            <person name="Witters E."/>
            <person name="De Jaeger G."/>
        </authorList>
    </citation>
    <scope>INTERACTION WITH EIF4B3</scope>
</reference>
<reference key="7">
    <citation type="journal article" date="2011" name="PLoS ONE">
        <title>Conserved CDC20 cell cycle functions are carried out by two of the five isoforms in Arabidopsis thaliana.</title>
        <authorList>
            <person name="Kevei Z."/>
            <person name="Baloban M."/>
            <person name="Da Ines O."/>
            <person name="Tiricz H."/>
            <person name="Kroll A."/>
            <person name="Regulski K."/>
            <person name="Mergaert P."/>
            <person name="Kondorosi E."/>
        </authorList>
    </citation>
    <scope>INTERACTION WITH CDC20-1; CDC20-2 AND CDC20-5</scope>
</reference>
<reference key="8">
    <citation type="journal article" date="2012" name="Plant Mol. Biol.">
        <title>Functional interaction between the Arabidopsis orthologs of spindle assembly checkpoint proteins MAD1 and MAD2 and the nucleoporin NUA.</title>
        <authorList>
            <person name="Ding D."/>
            <person name="Muthuswamy S."/>
            <person name="Meier I."/>
        </authorList>
    </citation>
    <scope>INTERACTION WITH MAD1</scope>
    <scope>DISRUPTION PHENOTYPE</scope>
    <scope>SUBCELLULAR LOCATION</scope>
</reference>
<evidence type="ECO:0000255" key="1">
    <source>
        <dbReference type="PROSITE-ProRule" id="PRU00109"/>
    </source>
</evidence>
<evidence type="ECO:0000269" key="2">
    <source>
    </source>
</evidence>
<evidence type="ECO:0000269" key="3">
    <source>
    </source>
</evidence>
<evidence type="ECO:0000269" key="4">
    <source>
    </source>
</evidence>
<evidence type="ECO:0000269" key="5">
    <source>
    </source>
</evidence>
<evidence type="ECO:0000303" key="6">
    <source>
    </source>
</evidence>
<evidence type="ECO:0000305" key="7"/>
<evidence type="ECO:0000312" key="8">
    <source>
        <dbReference type="Araport" id="AT3G25980"/>
    </source>
</evidence>
<evidence type="ECO:0000312" key="9">
    <source>
        <dbReference type="EMBL" id="BAB01061.1"/>
    </source>
</evidence>